<accession>B9JL06</accession>
<reference key="1">
    <citation type="journal article" date="2009" name="J. Bacteriol.">
        <title>Genome sequences of three Agrobacterium biovars help elucidate the evolution of multichromosome genomes in bacteria.</title>
        <authorList>
            <person name="Slater S.C."/>
            <person name="Goldman B.S."/>
            <person name="Goodner B."/>
            <person name="Setubal J.C."/>
            <person name="Farrand S.K."/>
            <person name="Nester E.W."/>
            <person name="Burr T.J."/>
            <person name="Banta L."/>
            <person name="Dickerman A.W."/>
            <person name="Paulsen I."/>
            <person name="Otten L."/>
            <person name="Suen G."/>
            <person name="Welch R."/>
            <person name="Almeida N.F."/>
            <person name="Arnold F."/>
            <person name="Burton O.T."/>
            <person name="Du Z."/>
            <person name="Ewing A."/>
            <person name="Godsy E."/>
            <person name="Heisel S."/>
            <person name="Houmiel K.L."/>
            <person name="Jhaveri J."/>
            <person name="Lu J."/>
            <person name="Miller N.M."/>
            <person name="Norton S."/>
            <person name="Chen Q."/>
            <person name="Phoolcharoen W."/>
            <person name="Ohlin V."/>
            <person name="Ondrusek D."/>
            <person name="Pride N."/>
            <person name="Stricklin S.L."/>
            <person name="Sun J."/>
            <person name="Wheeler C."/>
            <person name="Wilson L."/>
            <person name="Zhu H."/>
            <person name="Wood D.W."/>
        </authorList>
    </citation>
    <scope>NUCLEOTIDE SEQUENCE [LARGE SCALE GENOMIC DNA]</scope>
    <source>
        <strain>K84 / ATCC BAA-868</strain>
    </source>
</reference>
<name>NIKR_RHIR8</name>
<gene>
    <name type="ordered locus">Arad_9587</name>
</gene>
<dbReference type="EMBL" id="CP000629">
    <property type="protein sequence ID" value="ACM30598.1"/>
    <property type="molecule type" value="Genomic_DNA"/>
</dbReference>
<dbReference type="SMR" id="B9JL06"/>
<dbReference type="STRING" id="311403.Arad_9587"/>
<dbReference type="KEGG" id="ara:Arad_9587"/>
<dbReference type="eggNOG" id="COG0864">
    <property type="taxonomic scope" value="Bacteria"/>
</dbReference>
<dbReference type="HOGENOM" id="CLU_113319_1_4_5"/>
<dbReference type="Proteomes" id="UP000001600">
    <property type="component" value="Chromosome 2"/>
</dbReference>
<dbReference type="GO" id="GO:0003677">
    <property type="term" value="F:DNA binding"/>
    <property type="evidence" value="ECO:0007669"/>
    <property type="project" value="UniProtKB-KW"/>
</dbReference>
<dbReference type="GO" id="GO:0003700">
    <property type="term" value="F:DNA-binding transcription factor activity"/>
    <property type="evidence" value="ECO:0007669"/>
    <property type="project" value="UniProtKB-UniRule"/>
</dbReference>
<dbReference type="GO" id="GO:0016151">
    <property type="term" value="F:nickel cation binding"/>
    <property type="evidence" value="ECO:0007669"/>
    <property type="project" value="UniProtKB-UniRule"/>
</dbReference>
<dbReference type="GO" id="GO:0010045">
    <property type="term" value="P:response to nickel cation"/>
    <property type="evidence" value="ECO:0007669"/>
    <property type="project" value="InterPro"/>
</dbReference>
<dbReference type="CDD" id="cd22231">
    <property type="entry name" value="RHH_NikR_HicB-like"/>
    <property type="match status" value="1"/>
</dbReference>
<dbReference type="Gene3D" id="3.30.70.1150">
    <property type="entry name" value="ACT-like. Chain A, domain 2"/>
    <property type="match status" value="1"/>
</dbReference>
<dbReference type="Gene3D" id="1.10.1220.10">
    <property type="entry name" value="Met repressor-like"/>
    <property type="match status" value="1"/>
</dbReference>
<dbReference type="HAMAP" id="MF_00476">
    <property type="entry name" value="NikR"/>
    <property type="match status" value="1"/>
</dbReference>
<dbReference type="InterPro" id="IPR027271">
    <property type="entry name" value="Acetolactate_synth/TF_NikR_C"/>
</dbReference>
<dbReference type="InterPro" id="IPR045865">
    <property type="entry name" value="ACT-like_dom_sf"/>
</dbReference>
<dbReference type="InterPro" id="IPR013321">
    <property type="entry name" value="Arc_rbn_hlx_hlx"/>
</dbReference>
<dbReference type="InterPro" id="IPR002145">
    <property type="entry name" value="CopG"/>
</dbReference>
<dbReference type="InterPro" id="IPR050192">
    <property type="entry name" value="CopG/NikR_regulator"/>
</dbReference>
<dbReference type="InterPro" id="IPR022988">
    <property type="entry name" value="Ni_resp_reg_NikR"/>
</dbReference>
<dbReference type="InterPro" id="IPR014160">
    <property type="entry name" value="Nickel_NikR_proteobac"/>
</dbReference>
<dbReference type="InterPro" id="IPR010985">
    <property type="entry name" value="Ribbon_hlx_hlx"/>
</dbReference>
<dbReference type="InterPro" id="IPR014864">
    <property type="entry name" value="TF_NikR_Ni-bd_C"/>
</dbReference>
<dbReference type="NCBIfam" id="TIGR02793">
    <property type="entry name" value="nikR"/>
    <property type="match status" value="1"/>
</dbReference>
<dbReference type="NCBIfam" id="NF002169">
    <property type="entry name" value="PRK01002.1"/>
    <property type="match status" value="1"/>
</dbReference>
<dbReference type="NCBIfam" id="NF002815">
    <property type="entry name" value="PRK02967.1"/>
    <property type="match status" value="1"/>
</dbReference>
<dbReference type="NCBIfam" id="NF003381">
    <property type="entry name" value="PRK04460.1"/>
    <property type="match status" value="1"/>
</dbReference>
<dbReference type="PANTHER" id="PTHR34719">
    <property type="entry name" value="NICKEL-RESPONSIVE REGULATOR"/>
    <property type="match status" value="1"/>
</dbReference>
<dbReference type="PANTHER" id="PTHR34719:SF2">
    <property type="entry name" value="NICKEL-RESPONSIVE REGULATOR"/>
    <property type="match status" value="1"/>
</dbReference>
<dbReference type="Pfam" id="PF08753">
    <property type="entry name" value="NikR_C"/>
    <property type="match status" value="1"/>
</dbReference>
<dbReference type="Pfam" id="PF01402">
    <property type="entry name" value="RHH_1"/>
    <property type="match status" value="1"/>
</dbReference>
<dbReference type="SUPFAM" id="SSF55021">
    <property type="entry name" value="ACT-like"/>
    <property type="match status" value="1"/>
</dbReference>
<dbReference type="SUPFAM" id="SSF47598">
    <property type="entry name" value="Ribbon-helix-helix"/>
    <property type="match status" value="1"/>
</dbReference>
<keyword id="KW-0238">DNA-binding</keyword>
<keyword id="KW-0479">Metal-binding</keyword>
<keyword id="KW-0533">Nickel</keyword>
<keyword id="KW-0804">Transcription</keyword>
<keyword id="KW-0805">Transcription regulation</keyword>
<proteinExistence type="inferred from homology"/>
<evidence type="ECO:0000255" key="1">
    <source>
        <dbReference type="HAMAP-Rule" id="MF_00476"/>
    </source>
</evidence>
<comment type="function">
    <text evidence="1">Transcriptional regulator.</text>
</comment>
<comment type="cofactor">
    <cofactor evidence="1">
        <name>Ni(2+)</name>
        <dbReference type="ChEBI" id="CHEBI:49786"/>
    </cofactor>
    <text evidence="1">Binds 1 nickel ion per subunit.</text>
</comment>
<comment type="similarity">
    <text evidence="1">Belongs to the transcriptional regulatory CopG/NikR family.</text>
</comment>
<feature type="chain" id="PRO_1000135547" description="Putative nickel-responsive regulator">
    <location>
        <begin position="1"/>
        <end position="145"/>
    </location>
</feature>
<feature type="binding site" evidence="1">
    <location>
        <position position="77"/>
    </location>
    <ligand>
        <name>Ni(2+)</name>
        <dbReference type="ChEBI" id="CHEBI:49786"/>
    </ligand>
</feature>
<feature type="binding site" evidence="1">
    <location>
        <position position="88"/>
    </location>
    <ligand>
        <name>Ni(2+)</name>
        <dbReference type="ChEBI" id="CHEBI:49786"/>
    </ligand>
</feature>
<feature type="binding site" evidence="1">
    <location>
        <position position="90"/>
    </location>
    <ligand>
        <name>Ni(2+)</name>
        <dbReference type="ChEBI" id="CHEBI:49786"/>
    </ligand>
</feature>
<feature type="binding site" evidence="1">
    <location>
        <position position="96"/>
    </location>
    <ligand>
        <name>Ni(2+)</name>
        <dbReference type="ChEBI" id="CHEBI:49786"/>
    </ligand>
</feature>
<sequence length="145" mass="16398">MQRITITIDDDLLETIDKISEQRGYASRSETLRDLVRDAVTREQAAVDSETKCYATLTYVYEHETRDLSRRLTTTQHHHHDLSVSTLHVHVDGHDCLEVSVLKGTVGEIKSFADSVVTQRGVRFGNLHLIPSEHGPHDHGPHSHD</sequence>
<protein>
    <recommendedName>
        <fullName evidence="1">Putative nickel-responsive regulator</fullName>
    </recommendedName>
</protein>
<organism>
    <name type="scientific">Rhizobium rhizogenes (strain K84 / ATCC BAA-868)</name>
    <name type="common">Agrobacterium radiobacter</name>
    <dbReference type="NCBI Taxonomy" id="311403"/>
    <lineage>
        <taxon>Bacteria</taxon>
        <taxon>Pseudomonadati</taxon>
        <taxon>Pseudomonadota</taxon>
        <taxon>Alphaproteobacteria</taxon>
        <taxon>Hyphomicrobiales</taxon>
        <taxon>Rhizobiaceae</taxon>
        <taxon>Rhizobium/Agrobacterium group</taxon>
        <taxon>Rhizobium</taxon>
    </lineage>
</organism>